<evidence type="ECO:0000250" key="1"/>
<evidence type="ECO:0000305" key="2"/>
<organism>
    <name type="scientific">Pangasianodon gigas</name>
    <name type="common">Mekong giant catfish</name>
    <name type="synonym">Pangasius gigas</name>
    <dbReference type="NCBI Taxonomy" id="30993"/>
    <lineage>
        <taxon>Eukaryota</taxon>
        <taxon>Metazoa</taxon>
        <taxon>Chordata</taxon>
        <taxon>Craniata</taxon>
        <taxon>Vertebrata</taxon>
        <taxon>Euteleostomi</taxon>
        <taxon>Actinopterygii</taxon>
        <taxon>Neopterygii</taxon>
        <taxon>Teleostei</taxon>
        <taxon>Ostariophysi</taxon>
        <taxon>Siluriformes</taxon>
        <taxon>Pangasiidae</taxon>
        <taxon>Pangasianodon</taxon>
    </lineage>
</organism>
<proteinExistence type="evidence at transcript level"/>
<sequence>MARVLVVLSVVVASLFFSQGATFENQRLFNNAVIRVQHLHQLAAKMMDDFEEALLPEERKQLSKIFPLSFCNSDSIEAPAGKDETQKSSVLKLLHTSYRLIESWEFPSKNLGNPNHISEKLADLKMGIGVLIEGCLDGQTSLDENDSLAPPFEDFYQTLSEGNLRKSFRLLSCFKKDMHKVETYLSVAKCRRSLDSNCTL</sequence>
<feature type="signal peptide" evidence="1">
    <location>
        <begin position="1"/>
        <end position="22"/>
    </location>
</feature>
<feature type="chain" id="PRO_0000033045" description="Somatotropin">
    <location>
        <begin position="23"/>
        <end position="200"/>
    </location>
</feature>
<feature type="binding site" evidence="1">
    <location>
        <position position="38"/>
    </location>
    <ligand>
        <name>Zn(2+)</name>
        <dbReference type="ChEBI" id="CHEBI:29105"/>
    </ligand>
</feature>
<feature type="binding site" evidence="1">
    <location>
        <position position="182"/>
    </location>
    <ligand>
        <name>Zn(2+)</name>
        <dbReference type="ChEBI" id="CHEBI:29105"/>
    </ligand>
</feature>
<feature type="disulfide bond" evidence="1">
    <location>
        <begin position="71"/>
        <end position="173"/>
    </location>
</feature>
<feature type="disulfide bond" evidence="1">
    <location>
        <begin position="190"/>
        <end position="198"/>
    </location>
</feature>
<gene>
    <name type="primary">gh</name>
</gene>
<comment type="function">
    <text>Growth hormone plays an important role in growth control and is involved in the regulation of several anabolic processes. Implicated as an osmoregulatory substance important for seawater adaptation.</text>
</comment>
<comment type="subcellular location">
    <subcellularLocation>
        <location>Secreted</location>
    </subcellularLocation>
</comment>
<comment type="similarity">
    <text evidence="2">Belongs to the somatotropin/prolactin family.</text>
</comment>
<keyword id="KW-1015">Disulfide bond</keyword>
<keyword id="KW-0372">Hormone</keyword>
<keyword id="KW-0479">Metal-binding</keyword>
<keyword id="KW-0964">Secreted</keyword>
<keyword id="KW-0732">Signal</keyword>
<keyword id="KW-0862">Zinc</keyword>
<reference key="1">
    <citation type="journal article" date="1994" name="Gene">
        <title>Giant catfish Pangasianodon gigas growth hormone-encoding cDNA: cloning and sequencing by one-sided polymerase chain reaction.</title>
        <authorList>
            <person name="Lemaire C."/>
            <person name="Warit S."/>
            <person name="Panyim S."/>
        </authorList>
    </citation>
    <scope>NUCLEOTIDE SEQUENCE [MRNA]</scope>
    <source>
        <tissue>Pituitary</tissue>
    </source>
</reference>
<accession>P69162</accession>
<accession>P29970</accession>
<dbReference type="EMBL" id="L27835">
    <property type="protein sequence ID" value="AAA62615.1"/>
    <property type="molecule type" value="mRNA"/>
</dbReference>
<dbReference type="PIR" id="I51114">
    <property type="entry name" value="I51114"/>
</dbReference>
<dbReference type="SMR" id="P69162"/>
<dbReference type="GO" id="GO:0005615">
    <property type="term" value="C:extracellular space"/>
    <property type="evidence" value="ECO:0000250"/>
    <property type="project" value="UniProtKB"/>
</dbReference>
<dbReference type="GO" id="GO:0070186">
    <property type="term" value="F:growth hormone activity"/>
    <property type="evidence" value="ECO:0007669"/>
    <property type="project" value="TreeGrafter"/>
</dbReference>
<dbReference type="GO" id="GO:0005131">
    <property type="term" value="F:growth hormone receptor binding"/>
    <property type="evidence" value="ECO:0007669"/>
    <property type="project" value="InterPro"/>
</dbReference>
<dbReference type="GO" id="GO:0046872">
    <property type="term" value="F:metal ion binding"/>
    <property type="evidence" value="ECO:0007669"/>
    <property type="project" value="UniProtKB-KW"/>
</dbReference>
<dbReference type="GO" id="GO:0048513">
    <property type="term" value="P:animal organ development"/>
    <property type="evidence" value="ECO:0007669"/>
    <property type="project" value="TreeGrafter"/>
</dbReference>
<dbReference type="GO" id="GO:0060396">
    <property type="term" value="P:growth hormone receptor signaling pathway"/>
    <property type="evidence" value="ECO:0007669"/>
    <property type="project" value="TreeGrafter"/>
</dbReference>
<dbReference type="GO" id="GO:0042538">
    <property type="term" value="P:hyperosmotic salinity response"/>
    <property type="evidence" value="ECO:0000250"/>
    <property type="project" value="UniProtKB"/>
</dbReference>
<dbReference type="GO" id="GO:0045927">
    <property type="term" value="P:positive regulation of growth"/>
    <property type="evidence" value="ECO:0007669"/>
    <property type="project" value="TreeGrafter"/>
</dbReference>
<dbReference type="GO" id="GO:0046427">
    <property type="term" value="P:positive regulation of receptor signaling pathway via JAK-STAT"/>
    <property type="evidence" value="ECO:0007669"/>
    <property type="project" value="TreeGrafter"/>
</dbReference>
<dbReference type="GO" id="GO:1903576">
    <property type="term" value="P:response to L-arginine"/>
    <property type="evidence" value="ECO:0000250"/>
    <property type="project" value="UniProtKB"/>
</dbReference>
<dbReference type="GO" id="GO:0043434">
    <property type="term" value="P:response to peptide hormone"/>
    <property type="evidence" value="ECO:0000250"/>
    <property type="project" value="UniProtKB"/>
</dbReference>
<dbReference type="GO" id="GO:0042594">
    <property type="term" value="P:response to starvation"/>
    <property type="evidence" value="ECO:0000250"/>
    <property type="project" value="UniProtKB"/>
</dbReference>
<dbReference type="CDD" id="cd10285">
    <property type="entry name" value="somatotropin_like"/>
    <property type="match status" value="1"/>
</dbReference>
<dbReference type="FunFam" id="1.20.1250.10:FF:000009">
    <property type="entry name" value="Growth hormone"/>
    <property type="match status" value="1"/>
</dbReference>
<dbReference type="Gene3D" id="1.20.1250.10">
    <property type="match status" value="1"/>
</dbReference>
<dbReference type="InterPro" id="IPR009079">
    <property type="entry name" value="4_helix_cytokine-like_core"/>
</dbReference>
<dbReference type="InterPro" id="IPR034975">
    <property type="entry name" value="Somatotropin"/>
</dbReference>
<dbReference type="InterPro" id="IPR001400">
    <property type="entry name" value="Somatotropin/Prolactin"/>
</dbReference>
<dbReference type="InterPro" id="IPR018116">
    <property type="entry name" value="Somatotropin_CS"/>
</dbReference>
<dbReference type="PANTHER" id="PTHR11417:SF2">
    <property type="entry name" value="SOMATOTROPIN"/>
    <property type="match status" value="1"/>
</dbReference>
<dbReference type="PANTHER" id="PTHR11417">
    <property type="entry name" value="SOMATOTROPIN,PROLACTIN"/>
    <property type="match status" value="1"/>
</dbReference>
<dbReference type="Pfam" id="PF00103">
    <property type="entry name" value="Hormone_1"/>
    <property type="match status" value="1"/>
</dbReference>
<dbReference type="PRINTS" id="PR00836">
    <property type="entry name" value="SOMATOTROPIN"/>
</dbReference>
<dbReference type="SUPFAM" id="SSF47266">
    <property type="entry name" value="4-helical cytokines"/>
    <property type="match status" value="1"/>
</dbReference>
<dbReference type="PROSITE" id="PS00266">
    <property type="entry name" value="SOMATOTROPIN_1"/>
    <property type="match status" value="1"/>
</dbReference>
<dbReference type="PROSITE" id="PS00338">
    <property type="entry name" value="SOMATOTROPIN_2"/>
    <property type="match status" value="1"/>
</dbReference>
<protein>
    <recommendedName>
        <fullName>Somatotropin</fullName>
    </recommendedName>
    <alternativeName>
        <fullName>Growth hormone</fullName>
    </alternativeName>
</protein>
<name>SOMA_PANGG</name>